<comment type="function">
    <text evidence="2 6">Has bacteriolytic activity (By similarity). May play a role in digestion and in the host defense mechanisms against invading microbes (PubMed:16996284).</text>
</comment>
<comment type="catalytic activity">
    <reaction evidence="2">
        <text>Hydrolysis of (1-&gt;4)-beta-linkages between N-acetylmuramic acid and N-acetyl-D-glucosamine residues in a peptidoglycan and between N-acetyl-D-glucosamine residues in chitodextrins.</text>
        <dbReference type="EC" id="3.2.1.17"/>
    </reaction>
</comment>
<comment type="subcellular location">
    <subcellularLocation>
        <location evidence="1">Secreted</location>
    </subcellularLocation>
</comment>
<comment type="tissue specificity">
    <text evidence="5">Expressed in the basophil cells of the oyster digestive gland.</text>
</comment>
<comment type="similarity">
    <text evidence="4">Belongs to the glycosyl hydrolase 22 family. Type-I lysozyme subfamily.</text>
</comment>
<name>LYS_MAGGI</name>
<organism>
    <name type="scientific">Magallana gigas</name>
    <name type="common">Pacific oyster</name>
    <name type="synonym">Crassostrea gigas</name>
    <dbReference type="NCBI Taxonomy" id="29159"/>
    <lineage>
        <taxon>Eukaryota</taxon>
        <taxon>Metazoa</taxon>
        <taxon>Spiralia</taxon>
        <taxon>Lophotrochozoa</taxon>
        <taxon>Mollusca</taxon>
        <taxon>Bivalvia</taxon>
        <taxon>Autobranchia</taxon>
        <taxon>Pteriomorphia</taxon>
        <taxon>Ostreida</taxon>
        <taxon>Ostreoidea</taxon>
        <taxon>Ostreidae</taxon>
        <taxon>Magallana</taxon>
    </lineage>
</organism>
<evidence type="ECO:0000250" key="1">
    <source>
        <dbReference type="UniProtKB" id="P83673"/>
    </source>
</evidence>
<evidence type="ECO:0000250" key="2">
    <source>
        <dbReference type="UniProtKB" id="Q8IU26"/>
    </source>
</evidence>
<evidence type="ECO:0000255" key="3"/>
<evidence type="ECO:0000255" key="4">
    <source>
        <dbReference type="PROSITE-ProRule" id="PRU01257"/>
    </source>
</evidence>
<evidence type="ECO:0000269" key="5">
    <source>
    </source>
</evidence>
<evidence type="ECO:0000303" key="6">
    <source>
    </source>
</evidence>
<evidence type="ECO:0000305" key="7"/>
<dbReference type="EC" id="3.2.1.17" evidence="2"/>
<dbReference type="EMBL" id="AB179775">
    <property type="protein sequence ID" value="BAD19059.1"/>
    <property type="molecule type" value="mRNA"/>
</dbReference>
<dbReference type="SMR" id="Q6L6Q6"/>
<dbReference type="FunCoup" id="Q6L6Q6">
    <property type="interactions" value="30"/>
</dbReference>
<dbReference type="CAZy" id="GH22">
    <property type="family name" value="Glycoside Hydrolase Family 22"/>
</dbReference>
<dbReference type="HOGENOM" id="CLU_130604_1_0_1"/>
<dbReference type="InParanoid" id="Q6L6Q6"/>
<dbReference type="Proteomes" id="UP000005408">
    <property type="component" value="Unplaced"/>
</dbReference>
<dbReference type="GO" id="GO:0005576">
    <property type="term" value="C:extracellular region"/>
    <property type="evidence" value="ECO:0007669"/>
    <property type="project" value="UniProtKB-SubCell"/>
</dbReference>
<dbReference type="GO" id="GO:0003796">
    <property type="term" value="F:lysozyme activity"/>
    <property type="evidence" value="ECO:0007669"/>
    <property type="project" value="UniProtKB-EC"/>
</dbReference>
<dbReference type="GO" id="GO:0042742">
    <property type="term" value="P:defense response to bacterium"/>
    <property type="evidence" value="ECO:0007669"/>
    <property type="project" value="UniProtKB-KW"/>
</dbReference>
<dbReference type="GO" id="GO:0031640">
    <property type="term" value="P:killing of cells of another organism"/>
    <property type="evidence" value="ECO:0007669"/>
    <property type="project" value="UniProtKB-KW"/>
</dbReference>
<dbReference type="CDD" id="cd16890">
    <property type="entry name" value="lyz_i"/>
    <property type="match status" value="1"/>
</dbReference>
<dbReference type="FunFam" id="1.10.530.10:FF:000023">
    <property type="entry name" value="Invertebrate-type lysozyme"/>
    <property type="match status" value="1"/>
</dbReference>
<dbReference type="Gene3D" id="1.10.530.10">
    <property type="match status" value="1"/>
</dbReference>
<dbReference type="InterPro" id="IPR008597">
    <property type="entry name" value="Invert_lysozyme"/>
</dbReference>
<dbReference type="InterPro" id="IPR023346">
    <property type="entry name" value="Lysozyme-like_dom_sf"/>
</dbReference>
<dbReference type="PANTHER" id="PTHR11195">
    <property type="entry name" value="DESTABILASE-RELATED"/>
    <property type="match status" value="1"/>
</dbReference>
<dbReference type="PANTHER" id="PTHR11195:SF13">
    <property type="entry name" value="INVERTEBRATE-TYPE LYSOZYME 2-RELATED"/>
    <property type="match status" value="1"/>
</dbReference>
<dbReference type="Pfam" id="PF05497">
    <property type="entry name" value="Destabilase"/>
    <property type="match status" value="1"/>
</dbReference>
<dbReference type="SUPFAM" id="SSF53955">
    <property type="entry name" value="Lysozyme-like"/>
    <property type="match status" value="1"/>
</dbReference>
<dbReference type="PROSITE" id="PS51909">
    <property type="entry name" value="LYSOZYME_I"/>
    <property type="match status" value="1"/>
</dbReference>
<keyword id="KW-0044">Antibiotic</keyword>
<keyword id="KW-0929">Antimicrobial</keyword>
<keyword id="KW-0081">Bacteriolytic enzyme</keyword>
<keyword id="KW-1015">Disulfide bond</keyword>
<keyword id="KW-0326">Glycosidase</keyword>
<keyword id="KW-0378">Hydrolase</keyword>
<keyword id="KW-1185">Reference proteome</keyword>
<keyword id="KW-0964">Secreted</keyword>
<keyword id="KW-0732">Signal</keyword>
<gene>
    <name type="primary">lysoz</name>
</gene>
<feature type="signal peptide" evidence="3">
    <location>
        <begin position="1"/>
        <end position="20"/>
    </location>
</feature>
<feature type="chain" id="PRO_0000280511" description="Lysozyme">
    <location>
        <begin position="21"/>
        <end position="137"/>
    </location>
</feature>
<feature type="domain" description="I-type lysozyme" evidence="4">
    <location>
        <begin position="21"/>
        <end position="135"/>
    </location>
</feature>
<feature type="active site" description="Proton donor" evidence="4">
    <location>
        <position position="34"/>
    </location>
</feature>
<feature type="active site" description="Nucleophile" evidence="4">
    <location>
        <position position="45"/>
    </location>
</feature>
<feature type="binding site" evidence="2">
    <location>
        <begin position="57"/>
        <end position="63"/>
    </location>
    <ligand>
        <name>substrate</name>
    </ligand>
</feature>
<feature type="binding site" evidence="2">
    <location>
        <position position="88"/>
    </location>
    <ligand>
        <name>substrate</name>
    </ligand>
</feature>
<feature type="binding site" evidence="2">
    <location>
        <begin position="109"/>
        <end position="111"/>
    </location>
    <ligand>
        <name>substrate</name>
    </ligand>
</feature>
<feature type="disulfide bond" evidence="4">
    <location>
        <begin position="26"/>
        <end position="102"/>
    </location>
</feature>
<feature type="disulfide bond" evidence="4">
    <location>
        <begin position="31"/>
        <end position="37"/>
    </location>
</feature>
<feature type="disulfide bond" evidence="4">
    <location>
        <begin position="42"/>
        <end position="51"/>
    </location>
</feature>
<feature type="disulfide bond" evidence="4">
    <location>
        <begin position="64"/>
        <end position="84"/>
    </location>
</feature>
<feature type="disulfide bond" evidence="4">
    <location>
        <begin position="74"/>
        <end position="80"/>
    </location>
</feature>
<feature type="disulfide bond" evidence="4">
    <location>
        <begin position="98"/>
        <end position="116"/>
    </location>
</feature>
<accession>Q6L6Q6</accession>
<protein>
    <recommendedName>
        <fullName>Lysozyme</fullName>
        <ecNumber evidence="2">3.2.1.17</ecNumber>
    </recommendedName>
    <alternativeName>
        <fullName>1,4-beta-N-acetylmuramidase</fullName>
    </alternativeName>
    <alternativeName>
        <fullName evidence="7">Invertebrate-type lysozyme</fullName>
    </alternativeName>
</protein>
<sequence>MQRLLGSIVILATVFTFCEATISSACLRCICNVESGCRPIGCHYDVYSYSCGYFQIKENYWEDCGKPGTSFKACANDYTCASNCVRAYMKRYIGSSGCPANCESYARIHNGGPRGCRHPSTLRYWEKVHQQGCNVNS</sequence>
<reference key="1">
    <citation type="journal article" date="2006" name="Comp. Biochem. Physiol.">
        <title>Cloning of cDNAs and hybridization analysis of lysozymes from two oyster species, Crassostrea gigas and Ostrea edulis.</title>
        <authorList>
            <person name="Matsumoto T."/>
            <person name="Nakamura A.M."/>
            <person name="Takahashi K.G."/>
        </authorList>
    </citation>
    <scope>NUCLEOTIDE SEQUENCE [MRNA]</scope>
    <scope>TISSUE SPECIFICITY</scope>
</reference>
<proteinExistence type="evidence at transcript level"/>